<dbReference type="EC" id="3.2.2.27" evidence="1"/>
<dbReference type="EMBL" id="AM933172">
    <property type="protein sequence ID" value="CAR34156.1"/>
    <property type="molecule type" value="Genomic_DNA"/>
</dbReference>
<dbReference type="RefSeq" id="WP_000179978.1">
    <property type="nucleotide sequence ID" value="NC_011294.1"/>
</dbReference>
<dbReference type="SMR" id="B5QTW1"/>
<dbReference type="KEGG" id="set:SEN2574"/>
<dbReference type="HOGENOM" id="CLU_032162_3_0_6"/>
<dbReference type="Proteomes" id="UP000000613">
    <property type="component" value="Chromosome"/>
</dbReference>
<dbReference type="GO" id="GO:0005737">
    <property type="term" value="C:cytoplasm"/>
    <property type="evidence" value="ECO:0007669"/>
    <property type="project" value="UniProtKB-SubCell"/>
</dbReference>
<dbReference type="GO" id="GO:0004844">
    <property type="term" value="F:uracil DNA N-glycosylase activity"/>
    <property type="evidence" value="ECO:0007669"/>
    <property type="project" value="UniProtKB-UniRule"/>
</dbReference>
<dbReference type="GO" id="GO:0097510">
    <property type="term" value="P:base-excision repair, AP site formation via deaminated base removal"/>
    <property type="evidence" value="ECO:0007669"/>
    <property type="project" value="TreeGrafter"/>
</dbReference>
<dbReference type="CDD" id="cd10027">
    <property type="entry name" value="UDG-F1-like"/>
    <property type="match status" value="1"/>
</dbReference>
<dbReference type="FunFam" id="3.40.470.10:FF:000001">
    <property type="entry name" value="Uracil-DNA glycosylase"/>
    <property type="match status" value="1"/>
</dbReference>
<dbReference type="Gene3D" id="3.40.470.10">
    <property type="entry name" value="Uracil-DNA glycosylase-like domain"/>
    <property type="match status" value="1"/>
</dbReference>
<dbReference type="HAMAP" id="MF_00148">
    <property type="entry name" value="UDG"/>
    <property type="match status" value="1"/>
</dbReference>
<dbReference type="InterPro" id="IPR002043">
    <property type="entry name" value="UDG_fam1"/>
</dbReference>
<dbReference type="InterPro" id="IPR018085">
    <property type="entry name" value="Ura-DNA_Glyclase_AS"/>
</dbReference>
<dbReference type="InterPro" id="IPR005122">
    <property type="entry name" value="Uracil-DNA_glycosylase-like"/>
</dbReference>
<dbReference type="InterPro" id="IPR036895">
    <property type="entry name" value="Uracil-DNA_glycosylase-like_sf"/>
</dbReference>
<dbReference type="NCBIfam" id="NF003588">
    <property type="entry name" value="PRK05254.1-1"/>
    <property type="match status" value="1"/>
</dbReference>
<dbReference type="NCBIfam" id="NF003589">
    <property type="entry name" value="PRK05254.1-2"/>
    <property type="match status" value="1"/>
</dbReference>
<dbReference type="NCBIfam" id="NF003591">
    <property type="entry name" value="PRK05254.1-4"/>
    <property type="match status" value="1"/>
</dbReference>
<dbReference type="NCBIfam" id="NF003592">
    <property type="entry name" value="PRK05254.1-5"/>
    <property type="match status" value="1"/>
</dbReference>
<dbReference type="NCBIfam" id="TIGR00628">
    <property type="entry name" value="ung"/>
    <property type="match status" value="1"/>
</dbReference>
<dbReference type="PANTHER" id="PTHR11264">
    <property type="entry name" value="URACIL-DNA GLYCOSYLASE"/>
    <property type="match status" value="1"/>
</dbReference>
<dbReference type="PANTHER" id="PTHR11264:SF0">
    <property type="entry name" value="URACIL-DNA GLYCOSYLASE"/>
    <property type="match status" value="1"/>
</dbReference>
<dbReference type="Pfam" id="PF03167">
    <property type="entry name" value="UDG"/>
    <property type="match status" value="1"/>
</dbReference>
<dbReference type="SMART" id="SM00986">
    <property type="entry name" value="UDG"/>
    <property type="match status" value="1"/>
</dbReference>
<dbReference type="SMART" id="SM00987">
    <property type="entry name" value="UreE_C"/>
    <property type="match status" value="1"/>
</dbReference>
<dbReference type="SUPFAM" id="SSF52141">
    <property type="entry name" value="Uracil-DNA glycosylase-like"/>
    <property type="match status" value="1"/>
</dbReference>
<dbReference type="PROSITE" id="PS00130">
    <property type="entry name" value="U_DNA_GLYCOSYLASE"/>
    <property type="match status" value="1"/>
</dbReference>
<keyword id="KW-0963">Cytoplasm</keyword>
<keyword id="KW-0227">DNA damage</keyword>
<keyword id="KW-0234">DNA repair</keyword>
<keyword id="KW-0378">Hydrolase</keyword>
<protein>
    <recommendedName>
        <fullName evidence="1">Uracil-DNA glycosylase</fullName>
        <shortName evidence="1">UDG</shortName>
        <ecNumber evidence="1">3.2.2.27</ecNumber>
    </recommendedName>
</protein>
<reference key="1">
    <citation type="journal article" date="2008" name="Genome Res.">
        <title>Comparative genome analysis of Salmonella enteritidis PT4 and Salmonella gallinarum 287/91 provides insights into evolutionary and host adaptation pathways.</title>
        <authorList>
            <person name="Thomson N.R."/>
            <person name="Clayton D.J."/>
            <person name="Windhorst D."/>
            <person name="Vernikos G."/>
            <person name="Davidson S."/>
            <person name="Churcher C."/>
            <person name="Quail M.A."/>
            <person name="Stevens M."/>
            <person name="Jones M.A."/>
            <person name="Watson M."/>
            <person name="Barron A."/>
            <person name="Layton A."/>
            <person name="Pickard D."/>
            <person name="Kingsley R.A."/>
            <person name="Bignell A."/>
            <person name="Clark L."/>
            <person name="Harris B."/>
            <person name="Ormond D."/>
            <person name="Abdellah Z."/>
            <person name="Brooks K."/>
            <person name="Cherevach I."/>
            <person name="Chillingworth T."/>
            <person name="Woodward J."/>
            <person name="Norberczak H."/>
            <person name="Lord A."/>
            <person name="Arrowsmith C."/>
            <person name="Jagels K."/>
            <person name="Moule S."/>
            <person name="Mungall K."/>
            <person name="Saunders M."/>
            <person name="Whitehead S."/>
            <person name="Chabalgoity J.A."/>
            <person name="Maskell D."/>
            <person name="Humphreys T."/>
            <person name="Roberts M."/>
            <person name="Barrow P.A."/>
            <person name="Dougan G."/>
            <person name="Parkhill J."/>
        </authorList>
    </citation>
    <scope>NUCLEOTIDE SEQUENCE [LARGE SCALE GENOMIC DNA]</scope>
    <source>
        <strain>P125109</strain>
    </source>
</reference>
<proteinExistence type="inferred from homology"/>
<evidence type="ECO:0000255" key="1">
    <source>
        <dbReference type="HAMAP-Rule" id="MF_00148"/>
    </source>
</evidence>
<name>UNG_SALEP</name>
<gene>
    <name evidence="1" type="primary">ung</name>
    <name type="ordered locus">SEN2574</name>
</gene>
<organism>
    <name type="scientific">Salmonella enteritidis PT4 (strain P125109)</name>
    <dbReference type="NCBI Taxonomy" id="550537"/>
    <lineage>
        <taxon>Bacteria</taxon>
        <taxon>Pseudomonadati</taxon>
        <taxon>Pseudomonadota</taxon>
        <taxon>Gammaproteobacteria</taxon>
        <taxon>Enterobacterales</taxon>
        <taxon>Enterobacteriaceae</taxon>
        <taxon>Salmonella</taxon>
    </lineage>
</organism>
<comment type="function">
    <text evidence="1">Excises uracil residues from the DNA which can arise as a result of misincorporation of dUMP residues by DNA polymerase or due to deamination of cytosine.</text>
</comment>
<comment type="catalytic activity">
    <reaction evidence="1">
        <text>Hydrolyzes single-stranded DNA or mismatched double-stranded DNA and polynucleotides, releasing free uracil.</text>
        <dbReference type="EC" id="3.2.2.27"/>
    </reaction>
</comment>
<comment type="subcellular location">
    <subcellularLocation>
        <location evidence="1">Cytoplasm</location>
    </subcellularLocation>
</comment>
<comment type="similarity">
    <text evidence="1">Belongs to the uracil-DNA glycosylase (UDG) superfamily. UNG family.</text>
</comment>
<sequence>MATELTWHDVLADEKQQPYFINTLHTVAGERQSGITVYPPQKDVFNAFRFTELGDVKVVILGQDPYHGPGQAHGLAFSVRPGIAPPPSLVNMYKELEASIPGFVRPAHGYLESWARQGVLLLNTVLTVRAGQAHSHASLGWETFTDKVISLINQHREGVVFLLWGSHAQKKGAIIDPQRHHILKAPHPSPLSAHRGFFGCNHFALTNQWLEQHGEKTIDWTPVLPAESE</sequence>
<accession>B5QTW1</accession>
<feature type="chain" id="PRO_1000096603" description="Uracil-DNA glycosylase">
    <location>
        <begin position="1"/>
        <end position="229"/>
    </location>
</feature>
<feature type="active site" description="Proton acceptor" evidence="1">
    <location>
        <position position="64"/>
    </location>
</feature>